<gene>
    <name evidence="1" type="primary">pnp</name>
    <name type="ordered locus">swp_1223</name>
</gene>
<sequence length="701" mass="75533">MNPIVKSFEYGQHTVTLETGVIARQADAAVLASMGDTTVLVTVVGKKAEEPGRDFFPLTVNYQEKTYAAGKIPGGFFKREGRPSESETLIARLIDRPIRPLFPNGFKNEVQVIITVVSVDPEINPDIISMIGTSAALAISGLPFNGPLGVARVGYTNGEYVLNPDVTQLVDSELDLVVAGTEGAVLMVESEAASLPEEVMLGGVVYGHEQQQVVINAISELKAEASKPAWDWTAPVQDQELVAKIKDLAEAGLTEAYQIEVKQDRYTQVGVIKSAAKEALLAENPEADLREIDGLLGSLEKKVVRSRIIAGNPRIDGREPDMVRALNVMAGVLPRTHGSSLFTRGETQALVTCTLGTERDAQKVDSIMGEYTNRFMLHYNFPPYSVGETGFVGSPKRREIGHGKLAWRGINAVMPSAEEFPYSVRVVSEITESNGSSSMASVCGTSLALMDAGVPIKTSVAGIAMGLVKEGDDFVVLSDILGDEDHLGDMDFKVAGTRDGITALQMDIKIEGITKDIMQIALQQAYGARVHILNVMDQAIGSHREDISDHAPRITTLKINPEKIRDVIGKGGATIRALTEETGTTIELEDDGTVKIASSNGEATKEAIRRIEEITAEVEVGTVYNGKVVRIVDFGAFVTILPGKDGLVHISQIAEERVANVSDYLEVGQEVKVKVMEVDRQGRVRLSMKEAAPKAEAPAAE</sequence>
<dbReference type="EC" id="2.7.7.8" evidence="1"/>
<dbReference type="EMBL" id="CP000472">
    <property type="protein sequence ID" value="ACJ28017.1"/>
    <property type="molecule type" value="Genomic_DNA"/>
</dbReference>
<dbReference type="RefSeq" id="WP_020911395.1">
    <property type="nucleotide sequence ID" value="NC_011566.1"/>
</dbReference>
<dbReference type="SMR" id="B8CKH8"/>
<dbReference type="STRING" id="225849.swp_1223"/>
<dbReference type="KEGG" id="swp:swp_1223"/>
<dbReference type="eggNOG" id="COG1185">
    <property type="taxonomic scope" value="Bacteria"/>
</dbReference>
<dbReference type="HOGENOM" id="CLU_004217_2_2_6"/>
<dbReference type="OrthoDB" id="9804305at2"/>
<dbReference type="Proteomes" id="UP000000753">
    <property type="component" value="Chromosome"/>
</dbReference>
<dbReference type="GO" id="GO:0005829">
    <property type="term" value="C:cytosol"/>
    <property type="evidence" value="ECO:0007669"/>
    <property type="project" value="TreeGrafter"/>
</dbReference>
<dbReference type="GO" id="GO:0000175">
    <property type="term" value="F:3'-5'-RNA exonuclease activity"/>
    <property type="evidence" value="ECO:0007669"/>
    <property type="project" value="TreeGrafter"/>
</dbReference>
<dbReference type="GO" id="GO:0000287">
    <property type="term" value="F:magnesium ion binding"/>
    <property type="evidence" value="ECO:0007669"/>
    <property type="project" value="UniProtKB-UniRule"/>
</dbReference>
<dbReference type="GO" id="GO:0004654">
    <property type="term" value="F:polyribonucleotide nucleotidyltransferase activity"/>
    <property type="evidence" value="ECO:0007669"/>
    <property type="project" value="UniProtKB-UniRule"/>
</dbReference>
<dbReference type="GO" id="GO:0003723">
    <property type="term" value="F:RNA binding"/>
    <property type="evidence" value="ECO:0007669"/>
    <property type="project" value="UniProtKB-UniRule"/>
</dbReference>
<dbReference type="GO" id="GO:0006402">
    <property type="term" value="P:mRNA catabolic process"/>
    <property type="evidence" value="ECO:0007669"/>
    <property type="project" value="UniProtKB-UniRule"/>
</dbReference>
<dbReference type="GO" id="GO:0006396">
    <property type="term" value="P:RNA processing"/>
    <property type="evidence" value="ECO:0007669"/>
    <property type="project" value="InterPro"/>
</dbReference>
<dbReference type="CDD" id="cd02393">
    <property type="entry name" value="KH-I_PNPase"/>
    <property type="match status" value="1"/>
</dbReference>
<dbReference type="CDD" id="cd11363">
    <property type="entry name" value="RNase_PH_PNPase_1"/>
    <property type="match status" value="1"/>
</dbReference>
<dbReference type="CDD" id="cd11364">
    <property type="entry name" value="RNase_PH_PNPase_2"/>
    <property type="match status" value="1"/>
</dbReference>
<dbReference type="CDD" id="cd04472">
    <property type="entry name" value="S1_PNPase"/>
    <property type="match status" value="1"/>
</dbReference>
<dbReference type="FunFam" id="2.40.50.140:FF:000023">
    <property type="entry name" value="Polyribonucleotide nucleotidyltransferase"/>
    <property type="match status" value="1"/>
</dbReference>
<dbReference type="FunFam" id="3.30.1370.10:FF:000001">
    <property type="entry name" value="Polyribonucleotide nucleotidyltransferase"/>
    <property type="match status" value="1"/>
</dbReference>
<dbReference type="FunFam" id="3.30.230.70:FF:000001">
    <property type="entry name" value="Polyribonucleotide nucleotidyltransferase"/>
    <property type="match status" value="1"/>
</dbReference>
<dbReference type="FunFam" id="3.30.230.70:FF:000002">
    <property type="entry name" value="Polyribonucleotide nucleotidyltransferase"/>
    <property type="match status" value="1"/>
</dbReference>
<dbReference type="Gene3D" id="3.30.230.70">
    <property type="entry name" value="GHMP Kinase, N-terminal domain"/>
    <property type="match status" value="2"/>
</dbReference>
<dbReference type="Gene3D" id="3.30.1370.10">
    <property type="entry name" value="K Homology domain, type 1"/>
    <property type="match status" value="1"/>
</dbReference>
<dbReference type="Gene3D" id="2.40.50.140">
    <property type="entry name" value="Nucleic acid-binding proteins"/>
    <property type="match status" value="1"/>
</dbReference>
<dbReference type="HAMAP" id="MF_01595">
    <property type="entry name" value="PNPase"/>
    <property type="match status" value="1"/>
</dbReference>
<dbReference type="InterPro" id="IPR001247">
    <property type="entry name" value="ExoRNase_PH_dom1"/>
</dbReference>
<dbReference type="InterPro" id="IPR015847">
    <property type="entry name" value="ExoRNase_PH_dom2"/>
</dbReference>
<dbReference type="InterPro" id="IPR036345">
    <property type="entry name" value="ExoRNase_PH_dom2_sf"/>
</dbReference>
<dbReference type="InterPro" id="IPR004087">
    <property type="entry name" value="KH_dom"/>
</dbReference>
<dbReference type="InterPro" id="IPR004088">
    <property type="entry name" value="KH_dom_type_1"/>
</dbReference>
<dbReference type="InterPro" id="IPR036612">
    <property type="entry name" value="KH_dom_type_1_sf"/>
</dbReference>
<dbReference type="InterPro" id="IPR012340">
    <property type="entry name" value="NA-bd_OB-fold"/>
</dbReference>
<dbReference type="InterPro" id="IPR012162">
    <property type="entry name" value="PNPase"/>
</dbReference>
<dbReference type="InterPro" id="IPR027408">
    <property type="entry name" value="PNPase/RNase_PH_dom_sf"/>
</dbReference>
<dbReference type="InterPro" id="IPR015848">
    <property type="entry name" value="PNPase_PH_RNA-bd_bac/org-type"/>
</dbReference>
<dbReference type="InterPro" id="IPR036456">
    <property type="entry name" value="PNPase_PH_RNA-bd_sf"/>
</dbReference>
<dbReference type="InterPro" id="IPR020568">
    <property type="entry name" value="Ribosomal_Su5_D2-typ_SF"/>
</dbReference>
<dbReference type="InterPro" id="IPR003029">
    <property type="entry name" value="S1_domain"/>
</dbReference>
<dbReference type="NCBIfam" id="TIGR03591">
    <property type="entry name" value="polynuc_phos"/>
    <property type="match status" value="1"/>
</dbReference>
<dbReference type="NCBIfam" id="NF008805">
    <property type="entry name" value="PRK11824.1"/>
    <property type="match status" value="1"/>
</dbReference>
<dbReference type="PANTHER" id="PTHR11252">
    <property type="entry name" value="POLYRIBONUCLEOTIDE NUCLEOTIDYLTRANSFERASE"/>
    <property type="match status" value="1"/>
</dbReference>
<dbReference type="PANTHER" id="PTHR11252:SF0">
    <property type="entry name" value="POLYRIBONUCLEOTIDE NUCLEOTIDYLTRANSFERASE 1, MITOCHONDRIAL"/>
    <property type="match status" value="1"/>
</dbReference>
<dbReference type="Pfam" id="PF00013">
    <property type="entry name" value="KH_1"/>
    <property type="match status" value="1"/>
</dbReference>
<dbReference type="Pfam" id="PF03726">
    <property type="entry name" value="PNPase"/>
    <property type="match status" value="1"/>
</dbReference>
<dbReference type="Pfam" id="PF01138">
    <property type="entry name" value="RNase_PH"/>
    <property type="match status" value="2"/>
</dbReference>
<dbReference type="Pfam" id="PF03725">
    <property type="entry name" value="RNase_PH_C"/>
    <property type="match status" value="2"/>
</dbReference>
<dbReference type="Pfam" id="PF00575">
    <property type="entry name" value="S1"/>
    <property type="match status" value="1"/>
</dbReference>
<dbReference type="PIRSF" id="PIRSF005499">
    <property type="entry name" value="PNPase"/>
    <property type="match status" value="1"/>
</dbReference>
<dbReference type="SMART" id="SM00322">
    <property type="entry name" value="KH"/>
    <property type="match status" value="1"/>
</dbReference>
<dbReference type="SMART" id="SM00316">
    <property type="entry name" value="S1"/>
    <property type="match status" value="1"/>
</dbReference>
<dbReference type="SUPFAM" id="SSF54791">
    <property type="entry name" value="Eukaryotic type KH-domain (KH-domain type I)"/>
    <property type="match status" value="1"/>
</dbReference>
<dbReference type="SUPFAM" id="SSF50249">
    <property type="entry name" value="Nucleic acid-binding proteins"/>
    <property type="match status" value="1"/>
</dbReference>
<dbReference type="SUPFAM" id="SSF46915">
    <property type="entry name" value="Polynucleotide phosphorylase/guanosine pentaphosphate synthase (PNPase/GPSI), domain 3"/>
    <property type="match status" value="1"/>
</dbReference>
<dbReference type="SUPFAM" id="SSF55666">
    <property type="entry name" value="Ribonuclease PH domain 2-like"/>
    <property type="match status" value="2"/>
</dbReference>
<dbReference type="SUPFAM" id="SSF54211">
    <property type="entry name" value="Ribosomal protein S5 domain 2-like"/>
    <property type="match status" value="2"/>
</dbReference>
<dbReference type="PROSITE" id="PS50084">
    <property type="entry name" value="KH_TYPE_1"/>
    <property type="match status" value="1"/>
</dbReference>
<dbReference type="PROSITE" id="PS50126">
    <property type="entry name" value="S1"/>
    <property type="match status" value="1"/>
</dbReference>
<accession>B8CKH8</accession>
<comment type="function">
    <text evidence="1">Involved in mRNA degradation. Catalyzes the phosphorolysis of single-stranded polyribonucleotides processively in the 3'- to 5'-direction.</text>
</comment>
<comment type="catalytic activity">
    <reaction evidence="1">
        <text>RNA(n+1) + phosphate = RNA(n) + a ribonucleoside 5'-diphosphate</text>
        <dbReference type="Rhea" id="RHEA:22096"/>
        <dbReference type="Rhea" id="RHEA-COMP:14527"/>
        <dbReference type="Rhea" id="RHEA-COMP:17342"/>
        <dbReference type="ChEBI" id="CHEBI:43474"/>
        <dbReference type="ChEBI" id="CHEBI:57930"/>
        <dbReference type="ChEBI" id="CHEBI:140395"/>
        <dbReference type="EC" id="2.7.7.8"/>
    </reaction>
</comment>
<comment type="cofactor">
    <cofactor evidence="1">
        <name>Mg(2+)</name>
        <dbReference type="ChEBI" id="CHEBI:18420"/>
    </cofactor>
</comment>
<comment type="subunit">
    <text evidence="1">Component of the RNA degradosome, which is a multiprotein complex involved in RNA processing and mRNA degradation.</text>
</comment>
<comment type="subcellular location">
    <subcellularLocation>
        <location evidence="1">Cytoplasm</location>
    </subcellularLocation>
</comment>
<comment type="similarity">
    <text evidence="1">Belongs to the polyribonucleotide nucleotidyltransferase family.</text>
</comment>
<organism>
    <name type="scientific">Shewanella piezotolerans (strain WP3 / JCM 13877)</name>
    <dbReference type="NCBI Taxonomy" id="225849"/>
    <lineage>
        <taxon>Bacteria</taxon>
        <taxon>Pseudomonadati</taxon>
        <taxon>Pseudomonadota</taxon>
        <taxon>Gammaproteobacteria</taxon>
        <taxon>Alteromonadales</taxon>
        <taxon>Shewanellaceae</taxon>
        <taxon>Shewanella</taxon>
    </lineage>
</organism>
<evidence type="ECO:0000255" key="1">
    <source>
        <dbReference type="HAMAP-Rule" id="MF_01595"/>
    </source>
</evidence>
<protein>
    <recommendedName>
        <fullName evidence="1">Polyribonucleotide nucleotidyltransferase</fullName>
        <ecNumber evidence="1">2.7.7.8</ecNumber>
    </recommendedName>
    <alternativeName>
        <fullName evidence="1">Polynucleotide phosphorylase</fullName>
        <shortName evidence="1">PNPase</shortName>
    </alternativeName>
</protein>
<name>PNP_SHEPW</name>
<proteinExistence type="inferred from homology"/>
<reference key="1">
    <citation type="journal article" date="2008" name="PLoS ONE">
        <title>Environmental adaptation: genomic analysis of the piezotolerant and psychrotolerant deep-sea iron reducing bacterium Shewanella piezotolerans WP3.</title>
        <authorList>
            <person name="Wang F."/>
            <person name="Wang J."/>
            <person name="Jian H."/>
            <person name="Zhang B."/>
            <person name="Li S."/>
            <person name="Wang F."/>
            <person name="Zeng X."/>
            <person name="Gao L."/>
            <person name="Bartlett D.H."/>
            <person name="Yu J."/>
            <person name="Hu S."/>
            <person name="Xiao X."/>
        </authorList>
    </citation>
    <scope>NUCLEOTIDE SEQUENCE [LARGE SCALE GENOMIC DNA]</scope>
    <source>
        <strain>WP3 / JCM 13877</strain>
    </source>
</reference>
<keyword id="KW-0963">Cytoplasm</keyword>
<keyword id="KW-0460">Magnesium</keyword>
<keyword id="KW-0479">Metal-binding</keyword>
<keyword id="KW-0548">Nucleotidyltransferase</keyword>
<keyword id="KW-0694">RNA-binding</keyword>
<keyword id="KW-0808">Transferase</keyword>
<feature type="chain" id="PRO_1000192490" description="Polyribonucleotide nucleotidyltransferase">
    <location>
        <begin position="1"/>
        <end position="701"/>
    </location>
</feature>
<feature type="domain" description="KH" evidence="1">
    <location>
        <begin position="552"/>
        <end position="611"/>
    </location>
</feature>
<feature type="domain" description="S1 motif" evidence="1">
    <location>
        <begin position="621"/>
        <end position="689"/>
    </location>
</feature>
<feature type="binding site" evidence="1">
    <location>
        <position position="485"/>
    </location>
    <ligand>
        <name>Mg(2+)</name>
        <dbReference type="ChEBI" id="CHEBI:18420"/>
    </ligand>
</feature>
<feature type="binding site" evidence="1">
    <location>
        <position position="491"/>
    </location>
    <ligand>
        <name>Mg(2+)</name>
        <dbReference type="ChEBI" id="CHEBI:18420"/>
    </ligand>
</feature>